<name>VMS1_CAEEL</name>
<sequence length="618" mass="71320">MGFTLKSLEFLQGVEPFRIDENHENEGASEEEEVLISAETDAGMSLMLEWKMRLSEDSDQCTTCNCPVDFGDRAVLLEHYQSLFHRTNTLRKARNMTVYTEEDFEGIENSENDLTSSQTTIGLESDDEEFDALLLPANRSFFIKNGSVFSVPRNILHVGERDVSSVTFLRPFDCAIFLWNGGHFAAAMFENDKMTVQKSFHRYVARAKQGGVQSQHDSGGKGAAKSAGAQLRRYNEQKMKEEIQSIMSSWKSRLQKTPLLFIRCAAYHRNIFFEADAGIETRDDRIRTIPFETKRPNIDEISDCWQRLQQVSEHGAESDFRAEMLEVREKRKKLARKVAGKKRKDGGMQMICEWSDDDENEDISKEKKTHHIKVRTIKKPEETVVQWPRLDDEWRQKTYNYVRQDSVEALKEHLASLNEDVTSEANDYLRNAKIPPNRSTFLHVSAANDARKCLKYFLEEVNCDSSTKDGAGLPPYSSSANSDVKSIFIDYRVKNETAGNWARTHIPEPKKKVELTEEQEREQAERKKEKKARQKEKEKLKKEIAKRDVEEMEERQKYVNMSEREKRALAVDRRLAGLPPILRCHQCGVQLPPTPFQYSHYNFCSTSCVAEHRKANPQ</sequence>
<gene>
    <name type="primary">vms-1</name>
    <name type="ORF">K06H7.3</name>
</gene>
<organism>
    <name type="scientific">Caenorhabditis elegans</name>
    <dbReference type="NCBI Taxonomy" id="6239"/>
    <lineage>
        <taxon>Eukaryota</taxon>
        <taxon>Metazoa</taxon>
        <taxon>Ecdysozoa</taxon>
        <taxon>Nematoda</taxon>
        <taxon>Chromadorea</taxon>
        <taxon>Rhabditida</taxon>
        <taxon>Rhabditina</taxon>
        <taxon>Rhabditomorpha</taxon>
        <taxon>Rhabditoidea</taxon>
        <taxon>Rhabditidae</taxon>
        <taxon>Peloderinae</taxon>
        <taxon>Caenorhabditis</taxon>
    </lineage>
</organism>
<reference key="1">
    <citation type="journal article" date="1994" name="Nature">
        <title>2.2 Mb of contiguous nucleotide sequence from chromosome III of C. elegans.</title>
        <authorList>
            <person name="Wilson R."/>
            <person name="Ainscough R."/>
            <person name="Anderson K."/>
            <person name="Baynes C."/>
            <person name="Berks M."/>
            <person name="Bonfield J."/>
            <person name="Burton J."/>
            <person name="Connell M."/>
            <person name="Copsey T."/>
            <person name="Cooper J."/>
            <person name="Coulson A."/>
            <person name="Craxton M."/>
            <person name="Dear S."/>
            <person name="Du Z."/>
            <person name="Durbin R."/>
            <person name="Favello A."/>
            <person name="Fraser A."/>
            <person name="Fulton L."/>
            <person name="Gardner A."/>
            <person name="Green P."/>
            <person name="Hawkins T."/>
            <person name="Hillier L."/>
            <person name="Jier M."/>
            <person name="Johnston L."/>
            <person name="Jones M."/>
            <person name="Kershaw J."/>
            <person name="Kirsten J."/>
            <person name="Laisster N."/>
            <person name="Latreille P."/>
            <person name="Lightning J."/>
            <person name="Lloyd C."/>
            <person name="Mortimore B."/>
            <person name="O'Callaghan M."/>
            <person name="Parsons J."/>
            <person name="Percy C."/>
            <person name="Rifken L."/>
            <person name="Roopra A."/>
            <person name="Saunders D."/>
            <person name="Shownkeen R."/>
            <person name="Sims M."/>
            <person name="Smaldon N."/>
            <person name="Smith A."/>
            <person name="Smith M."/>
            <person name="Sonnhammer E."/>
            <person name="Staden R."/>
            <person name="Sulston J."/>
            <person name="Thierry-Mieg J."/>
            <person name="Thomas K."/>
            <person name="Vaudin M."/>
            <person name="Vaughan K."/>
            <person name="Waterston R."/>
            <person name="Watson A."/>
            <person name="Weinstock L."/>
            <person name="Wilkinson-Sproat J."/>
            <person name="Wohldman P."/>
        </authorList>
    </citation>
    <scope>NUCLEOTIDE SEQUENCE [LARGE SCALE GENOMIC DNA]</scope>
    <source>
        <strain>Bristol N2</strain>
    </source>
</reference>
<reference key="2">
    <citation type="journal article" date="1998" name="Science">
        <title>Genome sequence of the nematode C. elegans: a platform for investigating biology.</title>
        <authorList>
            <consortium name="The C. elegans sequencing consortium"/>
        </authorList>
    </citation>
    <scope>NUCLEOTIDE SEQUENCE [LARGE SCALE GENOMIC DNA]</scope>
    <source>
        <strain>Bristol N2</strain>
    </source>
</reference>
<reference key="3">
    <citation type="journal article" date="2010" name="Mol. Cell">
        <title>A stress-responsive system for mitochondrial protein degradation.</title>
        <authorList>
            <person name="Heo J.M."/>
            <person name="Livnat-Levanon N."/>
            <person name="Taylor E.B."/>
            <person name="Jones K.T."/>
            <person name="Dephoure N."/>
            <person name="Ring J."/>
            <person name="Xie J."/>
            <person name="Brodsky J.L."/>
            <person name="Madeo F."/>
            <person name="Gygi S.P."/>
            <person name="Ashrafi K."/>
            <person name="Glickman M.H."/>
            <person name="Rutter J."/>
        </authorList>
    </citation>
    <scope>FUNCTION</scope>
    <scope>SUBCELLULAR LOCATION</scope>
    <scope>TISSUE SPECIFICITY</scope>
</reference>
<comment type="function">
    <text evidence="1 5">Endonuclease that cleaves polypeptidyl-tRNAs downstream of the ribosome-associated quality control (RQC) pathway to release incompletely synthesized polypeptides for degradation (By similarity). The RQC pathway disassembles aberrantly stalled translation complexes to recycle or degrade the constituent parts (By similarity). Dispensable for viability and growth but is required for protection against oxidative stress and for wild-type life span (PubMed:21070972).</text>
</comment>
<comment type="subcellular location">
    <subcellularLocation>
        <location evidence="5">Cytoplasm</location>
    </subcellularLocation>
    <subcellularLocation>
        <location evidence="5">Mitochondrion</location>
    </subcellularLocation>
    <text>translocates from the cytosol to mitochondria upon exposure to hydrogen peroxide.</text>
</comment>
<comment type="tissue specificity">
    <text evidence="5">In larval stages and in adults, expressed in intestinal cells, specific neurons in the head and the tail, and in the ventral nerve cord.</text>
</comment>
<comment type="domain">
    <text evidence="3">The VLRF1 domain mediates binding to the 60S ribosomal subunit.</text>
</comment>
<comment type="similarity">
    <text evidence="3 6">Belongs to the ANKZF1/VMS1 family.</text>
</comment>
<accession>P34511</accession>
<dbReference type="EC" id="3.1.-.-" evidence="1"/>
<dbReference type="EMBL" id="FO080533">
    <property type="protein sequence ID" value="CCD64453.1"/>
    <property type="molecule type" value="Genomic_DNA"/>
</dbReference>
<dbReference type="PIR" id="S44843">
    <property type="entry name" value="S44843"/>
</dbReference>
<dbReference type="RefSeq" id="NP_498765.1">
    <property type="nucleotide sequence ID" value="NM_066364.8"/>
</dbReference>
<dbReference type="SMR" id="P34511"/>
<dbReference type="BioGRID" id="41347">
    <property type="interactions" value="3"/>
</dbReference>
<dbReference type="FunCoup" id="P34511">
    <property type="interactions" value="990"/>
</dbReference>
<dbReference type="IntAct" id="P34511">
    <property type="interactions" value="1"/>
</dbReference>
<dbReference type="STRING" id="6239.K06H7.3.3"/>
<dbReference type="PaxDb" id="6239-K06H7.3.2"/>
<dbReference type="PeptideAtlas" id="P34511"/>
<dbReference type="EnsemblMetazoa" id="K06H7.3.1">
    <property type="protein sequence ID" value="K06H7.3.1"/>
    <property type="gene ID" value="WBGene00019457"/>
</dbReference>
<dbReference type="GeneID" id="176141"/>
<dbReference type="KEGG" id="cel:CELE_K06H7.3"/>
<dbReference type="UCSC" id="K06H7.3.1">
    <property type="organism name" value="c. elegans"/>
</dbReference>
<dbReference type="AGR" id="WB:WBGene00019457"/>
<dbReference type="CTD" id="176141"/>
<dbReference type="WormBase" id="K06H7.3">
    <property type="protein sequence ID" value="CE26941"/>
    <property type="gene ID" value="WBGene00019457"/>
    <property type="gene designation" value="vms-1"/>
</dbReference>
<dbReference type="eggNOG" id="KOG2505">
    <property type="taxonomic scope" value="Eukaryota"/>
</dbReference>
<dbReference type="GeneTree" id="ENSGT00390000005911"/>
<dbReference type="HOGENOM" id="CLU_014293_0_1_1"/>
<dbReference type="InParanoid" id="P34511"/>
<dbReference type="OMA" id="AQKTIHR"/>
<dbReference type="OrthoDB" id="429841at2759"/>
<dbReference type="PhylomeDB" id="P34511"/>
<dbReference type="PRO" id="PR:P34511"/>
<dbReference type="Proteomes" id="UP000001940">
    <property type="component" value="Chromosome III"/>
</dbReference>
<dbReference type="Bgee" id="WBGene00019457">
    <property type="expression patterns" value="Expressed in adult organism and 4 other cell types or tissues"/>
</dbReference>
<dbReference type="GO" id="GO:0005737">
    <property type="term" value="C:cytoplasm"/>
    <property type="evidence" value="ECO:0000314"/>
    <property type="project" value="WormBase"/>
</dbReference>
<dbReference type="GO" id="GO:0030425">
    <property type="term" value="C:dendrite"/>
    <property type="evidence" value="ECO:0000314"/>
    <property type="project" value="WormBase"/>
</dbReference>
<dbReference type="GO" id="GO:0005739">
    <property type="term" value="C:mitochondrion"/>
    <property type="evidence" value="ECO:0007669"/>
    <property type="project" value="UniProtKB-SubCell"/>
</dbReference>
<dbReference type="GO" id="GO:0004519">
    <property type="term" value="F:endonuclease activity"/>
    <property type="evidence" value="ECO:0007669"/>
    <property type="project" value="UniProtKB-KW"/>
</dbReference>
<dbReference type="GO" id="GO:0008270">
    <property type="term" value="F:zinc ion binding"/>
    <property type="evidence" value="ECO:0007669"/>
    <property type="project" value="UniProtKB-KW"/>
</dbReference>
<dbReference type="GO" id="GO:0036503">
    <property type="term" value="P:ERAD pathway"/>
    <property type="evidence" value="ECO:0000318"/>
    <property type="project" value="GO_Central"/>
</dbReference>
<dbReference type="InterPro" id="IPR047139">
    <property type="entry name" value="ANKZ1/VMS1"/>
</dbReference>
<dbReference type="InterPro" id="IPR041540">
    <property type="entry name" value="VATC"/>
</dbReference>
<dbReference type="InterPro" id="IPR041175">
    <property type="entry name" value="VLRF1/Vms1"/>
</dbReference>
<dbReference type="InterPro" id="IPR013087">
    <property type="entry name" value="Znf_C2H2_type"/>
</dbReference>
<dbReference type="PANTHER" id="PTHR16036">
    <property type="entry name" value="ANKYRIN REPEAT AND ZINC FINGER DOMAIN-CONTAINING PROTEIN 1"/>
    <property type="match status" value="1"/>
</dbReference>
<dbReference type="PANTHER" id="PTHR16036:SF2">
    <property type="entry name" value="TRNA ENDONUCLEASE ANKZF1"/>
    <property type="match status" value="1"/>
</dbReference>
<dbReference type="Pfam" id="PF18826">
    <property type="entry name" value="bVLRF1"/>
    <property type="match status" value="1"/>
</dbReference>
<dbReference type="Pfam" id="PF18716">
    <property type="entry name" value="VATC"/>
    <property type="match status" value="1"/>
</dbReference>
<dbReference type="PROSITE" id="PS52044">
    <property type="entry name" value="VLRF1"/>
    <property type="match status" value="1"/>
</dbReference>
<dbReference type="PROSITE" id="PS00028">
    <property type="entry name" value="ZINC_FINGER_C2H2_1"/>
    <property type="match status" value="1"/>
</dbReference>
<keyword id="KW-0040">ANK repeat</keyword>
<keyword id="KW-0175">Coiled coil</keyword>
<keyword id="KW-0963">Cytoplasm</keyword>
<keyword id="KW-0255">Endonuclease</keyword>
<keyword id="KW-0378">Hydrolase</keyword>
<keyword id="KW-0479">Metal-binding</keyword>
<keyword id="KW-0496">Mitochondrion</keyword>
<keyword id="KW-0540">Nuclease</keyword>
<keyword id="KW-1185">Reference proteome</keyword>
<keyword id="KW-0677">Repeat</keyword>
<keyword id="KW-0862">Zinc</keyword>
<keyword id="KW-0863">Zinc-finger</keyword>
<protein>
    <recommendedName>
        <fullName evidence="6">tRNA endonuclease vms-1</fullName>
        <ecNumber evidence="1">3.1.-.-</ecNumber>
    </recommendedName>
</protein>
<evidence type="ECO:0000250" key="1">
    <source>
        <dbReference type="UniProtKB" id="Q9H8Y5"/>
    </source>
</evidence>
<evidence type="ECO:0000255" key="2"/>
<evidence type="ECO:0000255" key="3">
    <source>
        <dbReference type="PROSITE-ProRule" id="PRU01389"/>
    </source>
</evidence>
<evidence type="ECO:0000256" key="4">
    <source>
        <dbReference type="SAM" id="MobiDB-lite"/>
    </source>
</evidence>
<evidence type="ECO:0000269" key="5">
    <source>
    </source>
</evidence>
<evidence type="ECO:0000305" key="6"/>
<proteinExistence type="evidence at transcript level"/>
<feature type="chain" id="PRO_0000065404" description="tRNA endonuclease vms-1">
    <location>
        <begin position="1"/>
        <end position="618"/>
    </location>
</feature>
<feature type="domain" description="VLRF1" evidence="3">
    <location>
        <begin position="170"/>
        <end position="311"/>
    </location>
</feature>
<feature type="repeat" description="ANK 1">
    <location>
        <begin position="437"/>
        <end position="466"/>
    </location>
</feature>
<feature type="repeat" description="ANK 2">
    <location>
        <begin position="470"/>
        <end position="496"/>
    </location>
</feature>
<feature type="zinc finger region" description="C2H2-type">
    <location>
        <begin position="59"/>
        <end position="85"/>
    </location>
</feature>
<feature type="region of interest" description="Disordered" evidence="4">
    <location>
        <begin position="502"/>
        <end position="539"/>
    </location>
</feature>
<feature type="coiled-coil region" evidence="2">
    <location>
        <begin position="510"/>
        <end position="557"/>
    </location>
</feature>
<feature type="compositionally biased region" description="Basic and acidic residues" evidence="4">
    <location>
        <begin position="505"/>
        <end position="515"/>
    </location>
</feature>
<feature type="active site" evidence="3">
    <location>
        <position position="213"/>
    </location>
</feature>